<gene>
    <name type="primary">CAD1</name>
    <name type="synonym">CAD</name>
</gene>
<name>CADH1_EUCGU</name>
<dbReference type="EC" id="1.1.1.195" evidence="1"/>
<dbReference type="EMBL" id="X75480">
    <property type="protein sequence ID" value="CAA53211.1"/>
    <property type="molecule type" value="Genomic_DNA"/>
</dbReference>
<dbReference type="PIR" id="S60242">
    <property type="entry name" value="S60242"/>
</dbReference>
<dbReference type="SMR" id="Q42726"/>
<dbReference type="UniPathway" id="UPA00711"/>
<dbReference type="GO" id="GO:0045551">
    <property type="term" value="F:cinnamyl-alcohol dehydrogenase activity"/>
    <property type="evidence" value="ECO:0007669"/>
    <property type="project" value="UniProtKB-EC"/>
</dbReference>
<dbReference type="GO" id="GO:0050268">
    <property type="term" value="F:coniferyl-alcohol dehydrogenase activity"/>
    <property type="evidence" value="ECO:0007669"/>
    <property type="project" value="RHEA"/>
</dbReference>
<dbReference type="GO" id="GO:0008270">
    <property type="term" value="F:zinc ion binding"/>
    <property type="evidence" value="ECO:0007669"/>
    <property type="project" value="InterPro"/>
</dbReference>
<dbReference type="GO" id="GO:0009809">
    <property type="term" value="P:lignin biosynthetic process"/>
    <property type="evidence" value="ECO:0007669"/>
    <property type="project" value="UniProtKB-KW"/>
</dbReference>
<dbReference type="CDD" id="cd05283">
    <property type="entry name" value="CAD1"/>
    <property type="match status" value="1"/>
</dbReference>
<dbReference type="FunFam" id="3.40.50.720:FF:000022">
    <property type="entry name" value="Cinnamyl alcohol dehydrogenase"/>
    <property type="match status" value="1"/>
</dbReference>
<dbReference type="FunFam" id="3.90.180.10:FF:000004">
    <property type="entry name" value="probable cinnamyl alcohol dehydrogenase"/>
    <property type="match status" value="1"/>
</dbReference>
<dbReference type="FunFam" id="3.90.180.10:FF:000100">
    <property type="entry name" value="Putative cinnamyl alcohol dehydrogenase 6"/>
    <property type="match status" value="1"/>
</dbReference>
<dbReference type="Gene3D" id="3.90.180.10">
    <property type="entry name" value="Medium-chain alcohol dehydrogenases, catalytic domain"/>
    <property type="match status" value="1"/>
</dbReference>
<dbReference type="Gene3D" id="3.40.50.720">
    <property type="entry name" value="NAD(P)-binding Rossmann-like Domain"/>
    <property type="match status" value="1"/>
</dbReference>
<dbReference type="InterPro" id="IPR013149">
    <property type="entry name" value="ADH-like_C"/>
</dbReference>
<dbReference type="InterPro" id="IPR013154">
    <property type="entry name" value="ADH-like_N"/>
</dbReference>
<dbReference type="InterPro" id="IPR002328">
    <property type="entry name" value="ADH_Zn_CS"/>
</dbReference>
<dbReference type="InterPro" id="IPR047109">
    <property type="entry name" value="CAD-like"/>
</dbReference>
<dbReference type="InterPro" id="IPR011032">
    <property type="entry name" value="GroES-like_sf"/>
</dbReference>
<dbReference type="InterPro" id="IPR036291">
    <property type="entry name" value="NAD(P)-bd_dom_sf"/>
</dbReference>
<dbReference type="InterPro" id="IPR020843">
    <property type="entry name" value="PKS_ER"/>
</dbReference>
<dbReference type="PANTHER" id="PTHR42683">
    <property type="entry name" value="ALDEHYDE REDUCTASE"/>
    <property type="match status" value="1"/>
</dbReference>
<dbReference type="Pfam" id="PF08240">
    <property type="entry name" value="ADH_N"/>
    <property type="match status" value="1"/>
</dbReference>
<dbReference type="Pfam" id="PF00107">
    <property type="entry name" value="ADH_zinc_N"/>
    <property type="match status" value="1"/>
</dbReference>
<dbReference type="SMART" id="SM00829">
    <property type="entry name" value="PKS_ER"/>
    <property type="match status" value="1"/>
</dbReference>
<dbReference type="SUPFAM" id="SSF50129">
    <property type="entry name" value="GroES-like"/>
    <property type="match status" value="1"/>
</dbReference>
<dbReference type="SUPFAM" id="SSF51735">
    <property type="entry name" value="NAD(P)-binding Rossmann-fold domains"/>
    <property type="match status" value="1"/>
</dbReference>
<dbReference type="PROSITE" id="PS00059">
    <property type="entry name" value="ADH_ZINC"/>
    <property type="match status" value="1"/>
</dbReference>
<organism>
    <name type="scientific">Eucalyptus gunnii</name>
    <name type="common">Cider gum</name>
    <dbReference type="NCBI Taxonomy" id="3933"/>
    <lineage>
        <taxon>Eukaryota</taxon>
        <taxon>Viridiplantae</taxon>
        <taxon>Streptophyta</taxon>
        <taxon>Embryophyta</taxon>
        <taxon>Tracheophyta</taxon>
        <taxon>Spermatophyta</taxon>
        <taxon>Magnoliopsida</taxon>
        <taxon>eudicotyledons</taxon>
        <taxon>Gunneridae</taxon>
        <taxon>Pentapetalae</taxon>
        <taxon>rosids</taxon>
        <taxon>malvids</taxon>
        <taxon>Myrtales</taxon>
        <taxon>Myrtaceae</taxon>
        <taxon>Myrtoideae</taxon>
        <taxon>Eucalypteae</taxon>
        <taxon>Eucalyptus</taxon>
    </lineage>
</organism>
<evidence type="ECO:0000250" key="1">
    <source>
        <dbReference type="UniProtKB" id="O49482"/>
    </source>
</evidence>
<evidence type="ECO:0000305" key="2"/>
<proteinExistence type="inferred from homology"/>
<feature type="chain" id="PRO_0000160794" description="Probable cinnamyl alcohol dehydrogenase 1">
    <location>
        <begin position="1"/>
        <end position="354"/>
    </location>
</feature>
<feature type="binding site" evidence="1">
    <location>
        <position position="47"/>
    </location>
    <ligand>
        <name>Zn(2+)</name>
        <dbReference type="ChEBI" id="CHEBI:29105"/>
        <label>1</label>
        <note>catalytic</note>
    </ligand>
</feature>
<feature type="binding site" evidence="1">
    <location>
        <position position="49"/>
    </location>
    <ligand>
        <name>NADP(+)</name>
        <dbReference type="ChEBI" id="CHEBI:58349"/>
    </ligand>
</feature>
<feature type="binding site" evidence="1">
    <location>
        <position position="69"/>
    </location>
    <ligand>
        <name>Zn(2+)</name>
        <dbReference type="ChEBI" id="CHEBI:29105"/>
        <label>1</label>
        <note>catalytic</note>
    </ligand>
</feature>
<feature type="binding site" evidence="1">
    <location>
        <position position="70"/>
    </location>
    <ligand>
        <name>Zn(2+)</name>
        <dbReference type="ChEBI" id="CHEBI:29105"/>
        <label>1</label>
        <note>catalytic</note>
    </ligand>
</feature>
<feature type="binding site" evidence="1">
    <location>
        <position position="100"/>
    </location>
    <ligand>
        <name>Zn(2+)</name>
        <dbReference type="ChEBI" id="CHEBI:29105"/>
        <label>2</label>
    </ligand>
</feature>
<feature type="binding site" evidence="1">
    <location>
        <position position="103"/>
    </location>
    <ligand>
        <name>Zn(2+)</name>
        <dbReference type="ChEBI" id="CHEBI:29105"/>
        <label>2</label>
    </ligand>
</feature>
<feature type="binding site" evidence="1">
    <location>
        <position position="106"/>
    </location>
    <ligand>
        <name>Zn(2+)</name>
        <dbReference type="ChEBI" id="CHEBI:29105"/>
        <label>2</label>
    </ligand>
</feature>
<feature type="binding site" evidence="1">
    <location>
        <position position="114"/>
    </location>
    <ligand>
        <name>Zn(2+)</name>
        <dbReference type="ChEBI" id="CHEBI:29105"/>
        <label>2</label>
    </ligand>
</feature>
<feature type="binding site" evidence="1">
    <location>
        <position position="163"/>
    </location>
    <ligand>
        <name>Zn(2+)</name>
        <dbReference type="ChEBI" id="CHEBI:29105"/>
        <label>1</label>
        <note>catalytic</note>
    </ligand>
</feature>
<feature type="binding site" evidence="1">
    <location>
        <position position="167"/>
    </location>
    <ligand>
        <name>NADP(+)</name>
        <dbReference type="ChEBI" id="CHEBI:58349"/>
    </ligand>
</feature>
<feature type="binding site" evidence="1">
    <location>
        <begin position="188"/>
        <end position="193"/>
    </location>
    <ligand>
        <name>NADP(+)</name>
        <dbReference type="ChEBI" id="CHEBI:58349"/>
    </ligand>
</feature>
<feature type="binding site" evidence="1">
    <location>
        <begin position="211"/>
        <end position="216"/>
    </location>
    <ligand>
        <name>NADP(+)</name>
        <dbReference type="ChEBI" id="CHEBI:58349"/>
    </ligand>
</feature>
<feature type="binding site" evidence="1">
    <location>
        <position position="251"/>
    </location>
    <ligand>
        <name>NADP(+)</name>
        <dbReference type="ChEBI" id="CHEBI:58349"/>
    </ligand>
</feature>
<feature type="binding site" evidence="1">
    <location>
        <position position="275"/>
    </location>
    <ligand>
        <name>NADP(+)</name>
        <dbReference type="ChEBI" id="CHEBI:58349"/>
    </ligand>
</feature>
<feature type="binding site" evidence="1">
    <location>
        <begin position="296"/>
        <end position="298"/>
    </location>
    <ligand>
        <name>NADP(+)</name>
        <dbReference type="ChEBI" id="CHEBI:58349"/>
    </ligand>
</feature>
<keyword id="KW-0438">Lignin biosynthesis</keyword>
<keyword id="KW-0479">Metal-binding</keyword>
<keyword id="KW-0521">NADP</keyword>
<keyword id="KW-0560">Oxidoreductase</keyword>
<keyword id="KW-0862">Zinc</keyword>
<comment type="function">
    <text evidence="1">Involved in lignin biosynthesis. Catalyzes the final step specific for the production of lignin monomers. Catalyzes the NADPH-dependent reduction of coniferaldehyde, 5-hydroxyconiferaldehyde, sinapaldehyde, 4-coumaraldehyde and caffeyl aldehyde to their respective alcohols.</text>
</comment>
<comment type="catalytic activity">
    <reaction evidence="1">
        <text>(E)-cinnamyl alcohol + NADP(+) = (E)-cinnamaldehyde + NADPH + H(+)</text>
        <dbReference type="Rhea" id="RHEA:10392"/>
        <dbReference type="ChEBI" id="CHEBI:15378"/>
        <dbReference type="ChEBI" id="CHEBI:16731"/>
        <dbReference type="ChEBI" id="CHEBI:33227"/>
        <dbReference type="ChEBI" id="CHEBI:57783"/>
        <dbReference type="ChEBI" id="CHEBI:58349"/>
        <dbReference type="EC" id="1.1.1.195"/>
    </reaction>
    <physiologicalReaction direction="right-to-left" evidence="1">
        <dbReference type="Rhea" id="RHEA:10394"/>
    </physiologicalReaction>
</comment>
<comment type="catalytic activity">
    <reaction evidence="1">
        <text>(E)-coniferol + NADP(+) = (E)-coniferaldehyde + NADPH + H(+)</text>
        <dbReference type="Rhea" id="RHEA:22444"/>
        <dbReference type="ChEBI" id="CHEBI:15378"/>
        <dbReference type="ChEBI" id="CHEBI:16547"/>
        <dbReference type="ChEBI" id="CHEBI:17745"/>
        <dbReference type="ChEBI" id="CHEBI:57783"/>
        <dbReference type="ChEBI" id="CHEBI:58349"/>
        <dbReference type="EC" id="1.1.1.195"/>
    </reaction>
    <physiologicalReaction direction="right-to-left" evidence="1">
        <dbReference type="Rhea" id="RHEA:22446"/>
    </physiologicalReaction>
</comment>
<comment type="catalytic activity">
    <reaction evidence="1">
        <text>(E)-sinapyl alcohol + NADP(+) = (E)-sinapaldehyde + NADPH + H(+)</text>
        <dbReference type="Rhea" id="RHEA:45704"/>
        <dbReference type="ChEBI" id="CHEBI:15378"/>
        <dbReference type="ChEBI" id="CHEBI:27949"/>
        <dbReference type="ChEBI" id="CHEBI:57783"/>
        <dbReference type="ChEBI" id="CHEBI:58349"/>
        <dbReference type="ChEBI" id="CHEBI:64557"/>
        <dbReference type="EC" id="1.1.1.195"/>
    </reaction>
    <physiologicalReaction direction="right-to-left" evidence="1">
        <dbReference type="Rhea" id="RHEA:45706"/>
    </physiologicalReaction>
</comment>
<comment type="catalytic activity">
    <reaction evidence="1">
        <text>(E)-4-coumaroyl alcohol + NADP(+) = (E)-4-coumaraldehyde + NADPH + H(+)</text>
        <dbReference type="Rhea" id="RHEA:45724"/>
        <dbReference type="ChEBI" id="CHEBI:15378"/>
        <dbReference type="ChEBI" id="CHEBI:28353"/>
        <dbReference type="ChEBI" id="CHEBI:57783"/>
        <dbReference type="ChEBI" id="CHEBI:58349"/>
        <dbReference type="ChEBI" id="CHEBI:64555"/>
        <dbReference type="EC" id="1.1.1.195"/>
    </reaction>
    <physiologicalReaction direction="right-to-left" evidence="1">
        <dbReference type="Rhea" id="RHEA:45726"/>
    </physiologicalReaction>
</comment>
<comment type="catalytic activity">
    <reaction evidence="1">
        <text>(E)-caffeyl alcohol + NADP(+) = (E)-caffeyl aldehyde + NADPH + H(+)</text>
        <dbReference type="Rhea" id="RHEA:45728"/>
        <dbReference type="ChEBI" id="CHEBI:15378"/>
        <dbReference type="ChEBI" id="CHEBI:28323"/>
        <dbReference type="ChEBI" id="CHEBI:31334"/>
        <dbReference type="ChEBI" id="CHEBI:57783"/>
        <dbReference type="ChEBI" id="CHEBI:58349"/>
    </reaction>
    <physiologicalReaction direction="right-to-left" evidence="1">
        <dbReference type="Rhea" id="RHEA:45730"/>
    </physiologicalReaction>
</comment>
<comment type="cofactor">
    <cofactor evidence="1">
        <name>Zn(2+)</name>
        <dbReference type="ChEBI" id="CHEBI:29105"/>
    </cofactor>
    <text evidence="1">Binds 2 Zn(2+) ions per subunit.</text>
</comment>
<comment type="pathway">
    <text evidence="1">Aromatic compound metabolism; phenylpropanoid biosynthesis.</text>
</comment>
<comment type="subunit">
    <text evidence="1">Homodimer.</text>
</comment>
<comment type="similarity">
    <text evidence="2">Belongs to the zinc-containing alcohol dehydrogenase family.</text>
</comment>
<accession>Q42726</accession>
<protein>
    <recommendedName>
        <fullName>Probable cinnamyl alcohol dehydrogenase 1</fullName>
        <shortName>CAD 1</shortName>
        <ecNumber evidence="1">1.1.1.195</ecNumber>
    </recommendedName>
</protein>
<reference key="1">
    <citation type="journal article" date="1995" name="Plant Mol. Biol.">
        <title>Tissue- and cell-specific expression of a cinnamyl alcohol dehydrogenase promoter in transgenic poplar plants.</title>
        <authorList>
            <person name="Feuillet C."/>
            <person name="Lauvergeat V."/>
            <person name="Deswarte C."/>
            <person name="Pilate G."/>
            <person name="Boudet A."/>
            <person name="Grima-Pettenati J."/>
        </authorList>
    </citation>
    <scope>NUCLEOTIDE SEQUENCE [GENOMIC DNA]</scope>
</reference>
<sequence length="354" mass="38648">MGSLEKERTTTGWAARDPSGVLSPYTYSLRNTGPEDLYIKVLSCGICHSDIHQIKNDLGMSHYPMVPGHEVVGEVLEVGSEVTKYRVGDRVGTGIVVGCCRSCSPCNSDQEQYCNKKIWNYNDVYTDGKPTQGGFAGEIVVGERFVVKIPDGLESEQAAPLMCAGVTVYRPLVRFGLKQSGLRGGILGLGGVGHMGVKIAKAMGHHVTVISSSDKKRTEALEHLGADAYLVSSDENGMKEATDSLDYVFDTIPVVHPLEPYLALLKLDGKLILTGVINAPLQFISPMVMLESITGSFIGSMKETEEMLEFCKEKGLTSQIEVIKMDYVNTALERLEKNDVRYRFVVDVVGSKLD</sequence>